<keyword id="KW-0963">Cytoplasm</keyword>
<keyword id="KW-0274">FAD</keyword>
<keyword id="KW-0285">Flavoprotein</keyword>
<keyword id="KW-0520">NAD</keyword>
<keyword id="KW-1185">Reference proteome</keyword>
<keyword id="KW-0819">tRNA processing</keyword>
<organism>
    <name type="scientific">Pasteurella multocida (strain Pm70)</name>
    <dbReference type="NCBI Taxonomy" id="272843"/>
    <lineage>
        <taxon>Bacteria</taxon>
        <taxon>Pseudomonadati</taxon>
        <taxon>Pseudomonadota</taxon>
        <taxon>Gammaproteobacteria</taxon>
        <taxon>Pasteurellales</taxon>
        <taxon>Pasteurellaceae</taxon>
        <taxon>Pasteurella</taxon>
    </lineage>
</organism>
<proteinExistence type="inferred from homology"/>
<evidence type="ECO:0000255" key="1">
    <source>
        <dbReference type="HAMAP-Rule" id="MF_00129"/>
    </source>
</evidence>
<dbReference type="EMBL" id="AE004439">
    <property type="protein sequence ID" value="AAK03569.1"/>
    <property type="molecule type" value="Genomic_DNA"/>
</dbReference>
<dbReference type="RefSeq" id="WP_005724188.1">
    <property type="nucleotide sequence ID" value="NC_002663.1"/>
</dbReference>
<dbReference type="SMR" id="P57945"/>
<dbReference type="STRING" id="272843.PM1485"/>
<dbReference type="EnsemblBacteria" id="AAK03569">
    <property type="protein sequence ID" value="AAK03569"/>
    <property type="gene ID" value="PM1485"/>
</dbReference>
<dbReference type="GeneID" id="77206955"/>
<dbReference type="KEGG" id="pmu:PM1485"/>
<dbReference type="HOGENOM" id="CLU_007831_2_2_6"/>
<dbReference type="OrthoDB" id="9815560at2"/>
<dbReference type="Proteomes" id="UP000000809">
    <property type="component" value="Chromosome"/>
</dbReference>
<dbReference type="GO" id="GO:0005829">
    <property type="term" value="C:cytosol"/>
    <property type="evidence" value="ECO:0007669"/>
    <property type="project" value="TreeGrafter"/>
</dbReference>
<dbReference type="GO" id="GO:0050660">
    <property type="term" value="F:flavin adenine dinucleotide binding"/>
    <property type="evidence" value="ECO:0007669"/>
    <property type="project" value="UniProtKB-UniRule"/>
</dbReference>
<dbReference type="GO" id="GO:0030488">
    <property type="term" value="P:tRNA methylation"/>
    <property type="evidence" value="ECO:0007669"/>
    <property type="project" value="TreeGrafter"/>
</dbReference>
<dbReference type="GO" id="GO:0002098">
    <property type="term" value="P:tRNA wobble uridine modification"/>
    <property type="evidence" value="ECO:0007669"/>
    <property type="project" value="InterPro"/>
</dbReference>
<dbReference type="FunFam" id="1.10.10.1800:FF:000001">
    <property type="entry name" value="tRNA uridine 5-carboxymethylaminomethyl modification enzyme MnmG"/>
    <property type="match status" value="1"/>
</dbReference>
<dbReference type="FunFam" id="1.10.150.570:FF:000001">
    <property type="entry name" value="tRNA uridine 5-carboxymethylaminomethyl modification enzyme MnmG"/>
    <property type="match status" value="1"/>
</dbReference>
<dbReference type="FunFam" id="3.50.50.60:FF:000002">
    <property type="entry name" value="tRNA uridine 5-carboxymethylaminomethyl modification enzyme MnmG"/>
    <property type="match status" value="1"/>
</dbReference>
<dbReference type="FunFam" id="3.50.50.60:FF:000010">
    <property type="entry name" value="tRNA uridine 5-carboxymethylaminomethyl modification enzyme MnmG"/>
    <property type="match status" value="1"/>
</dbReference>
<dbReference type="Gene3D" id="3.50.50.60">
    <property type="entry name" value="FAD/NAD(P)-binding domain"/>
    <property type="match status" value="2"/>
</dbReference>
<dbReference type="Gene3D" id="1.10.150.570">
    <property type="entry name" value="GidA associated domain, C-terminal subdomain"/>
    <property type="match status" value="1"/>
</dbReference>
<dbReference type="Gene3D" id="1.10.10.1800">
    <property type="entry name" value="tRNA uridine 5-carboxymethylaminomethyl modification enzyme MnmG/GidA"/>
    <property type="match status" value="1"/>
</dbReference>
<dbReference type="HAMAP" id="MF_00129">
    <property type="entry name" value="MnmG_GidA"/>
    <property type="match status" value="1"/>
</dbReference>
<dbReference type="InterPro" id="IPR036188">
    <property type="entry name" value="FAD/NAD-bd_sf"/>
</dbReference>
<dbReference type="InterPro" id="IPR049312">
    <property type="entry name" value="GIDA_C_N"/>
</dbReference>
<dbReference type="InterPro" id="IPR004416">
    <property type="entry name" value="MnmG"/>
</dbReference>
<dbReference type="InterPro" id="IPR002218">
    <property type="entry name" value="MnmG-rel"/>
</dbReference>
<dbReference type="InterPro" id="IPR020595">
    <property type="entry name" value="MnmG-rel_CS"/>
</dbReference>
<dbReference type="InterPro" id="IPR026904">
    <property type="entry name" value="MnmG_C"/>
</dbReference>
<dbReference type="InterPro" id="IPR047001">
    <property type="entry name" value="MnmG_C_subdom"/>
</dbReference>
<dbReference type="InterPro" id="IPR044920">
    <property type="entry name" value="MnmG_C_subdom_sf"/>
</dbReference>
<dbReference type="InterPro" id="IPR040131">
    <property type="entry name" value="MnmG_N"/>
</dbReference>
<dbReference type="NCBIfam" id="TIGR00136">
    <property type="entry name" value="mnmG_gidA"/>
    <property type="match status" value="1"/>
</dbReference>
<dbReference type="PANTHER" id="PTHR11806">
    <property type="entry name" value="GLUCOSE INHIBITED DIVISION PROTEIN A"/>
    <property type="match status" value="1"/>
</dbReference>
<dbReference type="PANTHER" id="PTHR11806:SF0">
    <property type="entry name" value="PROTEIN MTO1 HOMOLOG, MITOCHONDRIAL"/>
    <property type="match status" value="1"/>
</dbReference>
<dbReference type="Pfam" id="PF01134">
    <property type="entry name" value="GIDA"/>
    <property type="match status" value="1"/>
</dbReference>
<dbReference type="Pfam" id="PF21680">
    <property type="entry name" value="GIDA_C_1st"/>
    <property type="match status" value="1"/>
</dbReference>
<dbReference type="Pfam" id="PF13932">
    <property type="entry name" value="SAM_GIDA_C"/>
    <property type="match status" value="1"/>
</dbReference>
<dbReference type="PRINTS" id="PR00411">
    <property type="entry name" value="PNDRDTASEI"/>
</dbReference>
<dbReference type="SMART" id="SM01228">
    <property type="entry name" value="GIDA_assoc_3"/>
    <property type="match status" value="1"/>
</dbReference>
<dbReference type="SUPFAM" id="SSF51905">
    <property type="entry name" value="FAD/NAD(P)-binding domain"/>
    <property type="match status" value="1"/>
</dbReference>
<dbReference type="PROSITE" id="PS01280">
    <property type="entry name" value="GIDA_1"/>
    <property type="match status" value="1"/>
</dbReference>
<dbReference type="PROSITE" id="PS01281">
    <property type="entry name" value="GIDA_2"/>
    <property type="match status" value="1"/>
</dbReference>
<sequence length="629" mass="70324">MFYTENYDVIVIGGGHAGTEAALAPARMGLKTLLLTHNVDTLGQMSCNPAIGGIGKGHLVREIDAMGGLMATAADQAGIQFRTLNSSKGPAVRATRAQADRVLYRQAVRIALENQENLDIFQQEVTDIILDQDRVCGVVTKMGLKFHAKAVILTAGTFLSGKIHIGLENYTGGRAGDPASVMLADRLRELNLRVDRLKTGTPPRIDARTIDFSVLAKQHGDEKLPVFSFMGSVDQHPRQIPCFITHTNEQTHEVIRNNLDRSPMYAGIIEGIGPRYCPSIEDKVMRFSERNSHQIYLEPEGLTSNEIYPNGISTSLPFDVQMKIVNSMKGMEKARIIKPGYAIEYDYFDPRDLKPTLETKSIRGLFFAGQINGTTGYEEAAGQGLLAGINAGLFVQEKEAWFPRRDQAYIGVLVDDLCTLGTKEPYRVFTSRAEYRLLLREDNADSRLTPIAHQLGLIDEKRWARFNQKMENIELERQRLRQIWLHPRSEYLDEANKVLGSPLVREASGEDLLRRPEMNYQILTSLTPFQPAMDDQEAVEQVEIAIKYQGYIEHQQEEIARQKRHESTAIPAHFDYTVVSGLSNEVRAKLEQHRPVSIGQASRISGVTPAAISILLVSLKKQGMLKRGE</sequence>
<feature type="chain" id="PRO_0000117146" description="tRNA uridine 5-carboxymethylaminomethyl modification enzyme MnmG">
    <location>
        <begin position="1"/>
        <end position="629"/>
    </location>
</feature>
<feature type="binding site" evidence="1">
    <location>
        <begin position="13"/>
        <end position="18"/>
    </location>
    <ligand>
        <name>FAD</name>
        <dbReference type="ChEBI" id="CHEBI:57692"/>
    </ligand>
</feature>
<feature type="binding site" evidence="1">
    <location>
        <position position="125"/>
    </location>
    <ligand>
        <name>FAD</name>
        <dbReference type="ChEBI" id="CHEBI:57692"/>
    </ligand>
</feature>
<feature type="binding site" evidence="1">
    <location>
        <position position="180"/>
    </location>
    <ligand>
        <name>FAD</name>
        <dbReference type="ChEBI" id="CHEBI:57692"/>
    </ligand>
</feature>
<feature type="binding site" evidence="1">
    <location>
        <begin position="273"/>
        <end position="287"/>
    </location>
    <ligand>
        <name>NAD(+)</name>
        <dbReference type="ChEBI" id="CHEBI:57540"/>
    </ligand>
</feature>
<feature type="binding site" evidence="1">
    <location>
        <position position="370"/>
    </location>
    <ligand>
        <name>FAD</name>
        <dbReference type="ChEBI" id="CHEBI:57692"/>
    </ligand>
</feature>
<reference key="1">
    <citation type="journal article" date="2001" name="Proc. Natl. Acad. Sci. U.S.A.">
        <title>Complete genomic sequence of Pasteurella multocida Pm70.</title>
        <authorList>
            <person name="May B.J."/>
            <person name="Zhang Q."/>
            <person name="Li L.L."/>
            <person name="Paustian M.L."/>
            <person name="Whittam T.S."/>
            <person name="Kapur V."/>
        </authorList>
    </citation>
    <scope>NUCLEOTIDE SEQUENCE [LARGE SCALE GENOMIC DNA]</scope>
    <source>
        <strain>Pm70</strain>
    </source>
</reference>
<protein>
    <recommendedName>
        <fullName evidence="1">tRNA uridine 5-carboxymethylaminomethyl modification enzyme MnmG</fullName>
    </recommendedName>
    <alternativeName>
        <fullName evidence="1">Glucose-inhibited division protein A</fullName>
    </alternativeName>
</protein>
<comment type="function">
    <text evidence="1">NAD-binding protein involved in the addition of a carboxymethylaminomethyl (cmnm) group at the wobble position (U34) of certain tRNAs, forming tRNA-cmnm(5)s(2)U34.</text>
</comment>
<comment type="cofactor">
    <cofactor evidence="1">
        <name>FAD</name>
        <dbReference type="ChEBI" id="CHEBI:57692"/>
    </cofactor>
</comment>
<comment type="subunit">
    <text evidence="1">Homodimer. Heterotetramer of two MnmE and two MnmG subunits.</text>
</comment>
<comment type="subcellular location">
    <subcellularLocation>
        <location evidence="1">Cytoplasm</location>
    </subcellularLocation>
</comment>
<comment type="similarity">
    <text evidence="1">Belongs to the MnmG family.</text>
</comment>
<gene>
    <name evidence="1" type="primary">mnmG</name>
    <name evidence="1" type="synonym">gidA</name>
    <name type="ordered locus">PM1485</name>
</gene>
<name>MNMG_PASMU</name>
<accession>P57945</accession>